<keyword id="KW-0963">Cytoplasm</keyword>
<keyword id="KW-1185">Reference proteome</keyword>
<keyword id="KW-0677">Repeat</keyword>
<keyword id="KW-0802">TPR repeat</keyword>
<proteinExistence type="inferred from homology"/>
<organism>
    <name type="scientific">Brugia malayi</name>
    <name type="common">Filarial nematode worm</name>
    <dbReference type="NCBI Taxonomy" id="6279"/>
    <lineage>
        <taxon>Eukaryota</taxon>
        <taxon>Metazoa</taxon>
        <taxon>Ecdysozoa</taxon>
        <taxon>Nematoda</taxon>
        <taxon>Chromadorea</taxon>
        <taxon>Rhabditida</taxon>
        <taxon>Spirurina</taxon>
        <taxon>Spiruromorpha</taxon>
        <taxon>Filarioidea</taxon>
        <taxon>Onchocercidae</taxon>
        <taxon>Brugia</taxon>
    </lineage>
</organism>
<protein>
    <recommendedName>
        <fullName evidence="1">Clustered mitochondria protein homolog</fullName>
    </recommendedName>
</protein>
<gene>
    <name type="ORF">Bm1_28595</name>
</gene>
<reference key="1">
    <citation type="journal article" date="2007" name="Science">
        <title>Draft genome of the filarial nematode parasite Brugia malayi.</title>
        <authorList>
            <person name="Ghedin E."/>
            <person name="Wang S."/>
            <person name="Spiro D."/>
            <person name="Caler E."/>
            <person name="Zhao Q."/>
            <person name="Crabtree J."/>
            <person name="Allen J.E."/>
            <person name="Delcher A.L."/>
            <person name="Guiliano D.B."/>
            <person name="Miranda-Saavedra D."/>
            <person name="Angiuoli S.V."/>
            <person name="Creasy T."/>
            <person name="Amedeo P."/>
            <person name="Haas B."/>
            <person name="El-Sayed N.M."/>
            <person name="Wortman J.R."/>
            <person name="Feldblyum T."/>
            <person name="Tallon L."/>
            <person name="Schatz M."/>
            <person name="Shumway M."/>
            <person name="Koo H."/>
            <person name="Salzberg S.L."/>
            <person name="Schobel S."/>
            <person name="Pertea M."/>
            <person name="Pop M."/>
            <person name="White O."/>
            <person name="Barton G.J."/>
            <person name="Carlow C.K.S."/>
            <person name="Crawford M.J."/>
            <person name="Daub J."/>
            <person name="Dimmic M.W."/>
            <person name="Estes C.F."/>
            <person name="Foster J.M."/>
            <person name="Ganatra M."/>
            <person name="Gregory W.F."/>
            <person name="Johnson N.M."/>
            <person name="Jin J."/>
            <person name="Komuniecki R."/>
            <person name="Korf I."/>
            <person name="Kumar S."/>
            <person name="Laney S."/>
            <person name="Li B.-W."/>
            <person name="Li W."/>
            <person name="Lindblom T.H."/>
            <person name="Lustigman S."/>
            <person name="Ma D."/>
            <person name="Maina C.V."/>
            <person name="Martin D.M."/>
            <person name="McCarter J.P."/>
            <person name="McReynolds L."/>
            <person name="Mitreva M."/>
            <person name="Nutman T.B."/>
            <person name="Parkinson J."/>
            <person name="Peregrin-Alvarez J.M."/>
            <person name="Poole C."/>
            <person name="Ren Q."/>
            <person name="Saunders L."/>
            <person name="Sluder A.E."/>
            <person name="Smith K."/>
            <person name="Stanke M."/>
            <person name="Unnasch T.R."/>
            <person name="Ware J."/>
            <person name="Wei A.D."/>
            <person name="Weil G."/>
            <person name="Williams D.J."/>
            <person name="Zhang Y."/>
            <person name="Williams S.A."/>
            <person name="Fraser-Liggett C."/>
            <person name="Slatko B."/>
            <person name="Blaxter M.L."/>
            <person name="Scott A.L."/>
        </authorList>
    </citation>
    <scope>NUCLEOTIDE SEQUENCE [LARGE SCALE GENOMIC DNA]</scope>
</reference>
<dbReference type="EMBL" id="DS239371">
    <property type="protein sequence ID" value="EDP33970.1"/>
    <property type="status" value="ALT_SEQ"/>
    <property type="molecule type" value="Genomic_DNA"/>
</dbReference>
<dbReference type="RefSeq" id="XP_001897167.1">
    <property type="nucleotide sequence ID" value="XM_001897132.1"/>
</dbReference>
<dbReference type="SMR" id="A8PJX4"/>
<dbReference type="FunCoup" id="A8PJX4">
    <property type="interactions" value="1910"/>
</dbReference>
<dbReference type="STRING" id="6279.A8PJX4"/>
<dbReference type="WormBase" id="Bm4445">
    <property type="protein sequence ID" value="BM40048"/>
    <property type="gene ID" value="WBGene00224706"/>
    <property type="gene designation" value="Bma-clu-1"/>
</dbReference>
<dbReference type="InParanoid" id="A8PJX4"/>
<dbReference type="Proteomes" id="UP000006672">
    <property type="component" value="Unassembled WGS sequence"/>
</dbReference>
<dbReference type="GO" id="GO:0005737">
    <property type="term" value="C:cytoplasm"/>
    <property type="evidence" value="ECO:0007669"/>
    <property type="project" value="UniProtKB-SubCell"/>
</dbReference>
<dbReference type="GO" id="GO:0003729">
    <property type="term" value="F:mRNA binding"/>
    <property type="evidence" value="ECO:0007669"/>
    <property type="project" value="TreeGrafter"/>
</dbReference>
<dbReference type="GO" id="GO:0048312">
    <property type="term" value="P:intracellular distribution of mitochondria"/>
    <property type="evidence" value="ECO:0007669"/>
    <property type="project" value="TreeGrafter"/>
</dbReference>
<dbReference type="GO" id="GO:0007005">
    <property type="term" value="P:mitochondrion organization"/>
    <property type="evidence" value="ECO:0007669"/>
    <property type="project" value="UniProtKB-UniRule"/>
</dbReference>
<dbReference type="CDD" id="cd15466">
    <property type="entry name" value="CLU-central"/>
    <property type="match status" value="1"/>
</dbReference>
<dbReference type="FunFam" id="1.25.40.10:FF:000099">
    <property type="entry name" value="Clustered mitochondria protein homolog"/>
    <property type="match status" value="1"/>
</dbReference>
<dbReference type="FunFam" id="3.30.2280.10:FF:000002">
    <property type="entry name" value="Clustered mitochondria protein homolog"/>
    <property type="match status" value="1"/>
</dbReference>
<dbReference type="Gene3D" id="3.30.2280.10">
    <property type="entry name" value="Hypothetical protein (hspc210)"/>
    <property type="match status" value="1"/>
</dbReference>
<dbReference type="Gene3D" id="1.25.40.10">
    <property type="entry name" value="Tetratricopeptide repeat domain"/>
    <property type="match status" value="2"/>
</dbReference>
<dbReference type="HAMAP" id="MF_03013">
    <property type="entry name" value="CLU"/>
    <property type="match status" value="1"/>
</dbReference>
<dbReference type="InterPro" id="IPR033646">
    <property type="entry name" value="CLU-central"/>
</dbReference>
<dbReference type="InterPro" id="IPR025697">
    <property type="entry name" value="CLU_dom"/>
</dbReference>
<dbReference type="InterPro" id="IPR028275">
    <property type="entry name" value="CLU_N"/>
</dbReference>
<dbReference type="InterPro" id="IPR027523">
    <property type="entry name" value="CLU_prot"/>
</dbReference>
<dbReference type="InterPro" id="IPR023231">
    <property type="entry name" value="GSKIP_dom_sf"/>
</dbReference>
<dbReference type="InterPro" id="IPR011990">
    <property type="entry name" value="TPR-like_helical_dom_sf"/>
</dbReference>
<dbReference type="PANTHER" id="PTHR12601:SF6">
    <property type="entry name" value="CLUSTERED MITOCHONDRIA PROTEIN HOMOLOG"/>
    <property type="match status" value="1"/>
</dbReference>
<dbReference type="PANTHER" id="PTHR12601">
    <property type="entry name" value="EUKARYOTIC TRANSLATION INITIATION FACTOR 3 SUBUNIT EIF-3"/>
    <property type="match status" value="1"/>
</dbReference>
<dbReference type="Pfam" id="PF13236">
    <property type="entry name" value="CLU"/>
    <property type="match status" value="1"/>
</dbReference>
<dbReference type="Pfam" id="PF15044">
    <property type="entry name" value="CLU_N"/>
    <property type="match status" value="1"/>
</dbReference>
<dbReference type="Pfam" id="PF12807">
    <property type="entry name" value="eIF3_p135"/>
    <property type="match status" value="1"/>
</dbReference>
<dbReference type="Pfam" id="PF13424">
    <property type="entry name" value="TPR_12"/>
    <property type="match status" value="1"/>
</dbReference>
<dbReference type="SUPFAM" id="SSF103107">
    <property type="entry name" value="Hypothetical protein c14orf129, hspc210"/>
    <property type="match status" value="1"/>
</dbReference>
<dbReference type="SUPFAM" id="SSF48452">
    <property type="entry name" value="TPR-like"/>
    <property type="match status" value="1"/>
</dbReference>
<dbReference type="PROSITE" id="PS51823">
    <property type="entry name" value="CLU"/>
    <property type="match status" value="1"/>
</dbReference>
<dbReference type="PROSITE" id="PS50293">
    <property type="entry name" value="TPR_REGION"/>
    <property type="match status" value="1"/>
</dbReference>
<accession>A8PJX4</accession>
<evidence type="ECO:0000255" key="1">
    <source>
        <dbReference type="HAMAP-Rule" id="MF_03013"/>
    </source>
</evidence>
<evidence type="ECO:0000255" key="2">
    <source>
        <dbReference type="PROSITE-ProRule" id="PRU01167"/>
    </source>
</evidence>
<evidence type="ECO:0000256" key="3">
    <source>
        <dbReference type="SAM" id="MobiDB-lite"/>
    </source>
</evidence>
<evidence type="ECO:0000305" key="4"/>
<comment type="function">
    <text evidence="1">mRNA-binding protein involved in proper cytoplasmic distribution of mitochondria.</text>
</comment>
<comment type="subcellular location">
    <subcellularLocation>
        <location evidence="1">Cytoplasm</location>
    </subcellularLocation>
</comment>
<comment type="similarity">
    <text evidence="1">Belongs to the CLU family.</text>
</comment>
<comment type="sequence caution" evidence="4">
    <conflict type="erroneous gene model prediction">
        <sequence resource="EMBL-CDS" id="EDP33970"/>
    </conflict>
</comment>
<feature type="chain" id="PRO_0000366389" description="Clustered mitochondria protein homolog">
    <location>
        <begin position="1"/>
        <end position="1453"/>
    </location>
</feature>
<feature type="domain" description="Clu" evidence="2">
    <location>
        <begin position="439"/>
        <end position="690"/>
    </location>
</feature>
<feature type="repeat" description="TPR 1">
    <location>
        <begin position="1235"/>
        <end position="1268"/>
    </location>
</feature>
<feature type="repeat" description="TPR 2">
    <location>
        <begin position="1277"/>
        <end position="1310"/>
    </location>
</feature>
<feature type="region of interest" description="Disordered" evidence="3">
    <location>
        <begin position="78"/>
        <end position="110"/>
    </location>
</feature>
<feature type="region of interest" description="Disordered" evidence="3">
    <location>
        <begin position="979"/>
        <end position="1015"/>
    </location>
</feature>
<feature type="compositionally biased region" description="Polar residues" evidence="3">
    <location>
        <begin position="78"/>
        <end position="101"/>
    </location>
</feature>
<feature type="compositionally biased region" description="Basic residues" evidence="3">
    <location>
        <begin position="995"/>
        <end position="1005"/>
    </location>
</feature>
<sequence length="1453" mass="163098">MCVCACARVCVYVCTRHHPPLDVFPADDVITPPCSSWPLRGVMSRPACQCLRRCEVMGEVNGPVCSPEIVLASAGKTLSENGQENSPHNSDSGHETSSPDSPLTPIEEGAVSPGDDSFFVVWIKFMVLPRKLCINKDVEKLFSAAEKTGNDGEVLCPSDECDTFRIRIIAPGAEPFDLQVNSNEMVQELHQVLLEREATCHRTCFSLQLNGVSLDHFTELKNISGLTDGSVLRVVEQPYTTREARIHVRHIRDLIRSLDMSDAVNGTDGASMSYLASMTLGDRKKNADKTLECSPPDYVLPGYKERPLIPLLPVMKEPVLALKSLAISPFNPPPGHRKLKGDVLYLTFDTREGRRYHITCCTKGFYVNATTEAGFRPTPSPSHRTVHHSLLDLLSSISISFKRAMALILKRRSEKHIFERLPTPYQVNSWIAPVFEQIEDGIRAEDCTQPHKIGLEDHIPGQIRDWNEELQTTHELPRETLGERLIRERAIFKIHSDFVSAAIKVNVSMAVVDGNVVAINPADEPRTHMYIWNNIFFSLGFDVKDHYKDLGGDAAAHAATSNDLQGVRAYAQLDNPKLFTLGMVIVDYKGFRVTAQSIIPGILEREQEQSVIYGSVDFGKTVVSSEEYHDLLSKPAEQLKILPHEVHSGKDDGKIIKLCSSFETKGIVGNDSRHYILDLLRTFPPDVNYLEDAEVTDICKANGYPRTFPHKLASLRQELIDAFVEYRYLMFIRIAAYHVQQTKLGLLETDYNDDKKETTKEDTVLKVTGFSEDAIMSQIKREITADIKIDEMPLLETEAAKKIMEEVIDSDHKKVDSLDKEISETIMAKAAKAVGSIRMDAFDVRFNPDCYCSTVRHAESEDITKQRRLVAEAAEFLIVQQLPNFVRDCLQRTIMLLDGASLIDSLHSRGINIRYLGKLTKYIQNVGQLSYVKVICITELLCRCAKHIFRGYLQPVSSAHTAAAVSHFLNCLLSSSTEPLTPSNEEVSMPINSVKKSRSSKRRKQISSGGKENDDWAQMSSHKLWERVKSDADFYYAFTIDEENIDAYLSTVGIQKTSFLRRFVQIVGIQMLLRDYNLESGKKSQLFVEDDIQSLYCQAKHVDPKAVDAHSLFLSGQTKVQQGQLRAGFDLVLESLNLMNSVYGAMHSDMAQCMRLLARLSYILGDPSEALSQQHKATLMSERCNGLDSANTIIEYLNLAHFSFANLHIAAALKLLYRARYLLLLIHGENHPFMAEIDGNIGVILYAVQEFDDALKFLQNALKLHQIYLEPQALKTALIYHLLARTYSCRGDFRTALQMEKETFTIYSKTFGIDHEKTKESSDCLKHLTQQAVTFQKRINEANRQGSNNIGQLLPVEIHRPSLHSVLEVLNILNGIIFIQLKGISTSSDIGEENYELGNNNNNNNKRKKKAVEDLAVKKNGNNDDTTVISSRPQVNNMSGSSTVQVMQEVALD</sequence>
<name>CLU_BRUMA</name>